<proteinExistence type="evidence at transcript level"/>
<reference key="1">
    <citation type="journal article" date="1998" name="Plant Cell Physiol.">
        <title>Molecular cloning of plant spermidine synthases.</title>
        <authorList>
            <person name="Hashimoto T."/>
            <person name="Tamaki K."/>
            <person name="Suzuki K."/>
            <person name="Yamada Y."/>
        </authorList>
    </citation>
    <scope>NUCLEOTIDE SEQUENCE [MRNA]</scope>
    <source>
        <tissue>Root</tissue>
    </source>
</reference>
<name>SPDS1_HYONI</name>
<evidence type="ECO:0000250" key="1"/>
<evidence type="ECO:0000305" key="2"/>
<comment type="catalytic activity">
    <reaction>
        <text>S-adenosyl 3-(methylsulfanyl)propylamine + putrescine = S-methyl-5'-thioadenosine + spermidine + H(+)</text>
        <dbReference type="Rhea" id="RHEA:12721"/>
        <dbReference type="ChEBI" id="CHEBI:15378"/>
        <dbReference type="ChEBI" id="CHEBI:17509"/>
        <dbReference type="ChEBI" id="CHEBI:57443"/>
        <dbReference type="ChEBI" id="CHEBI:57834"/>
        <dbReference type="ChEBI" id="CHEBI:326268"/>
        <dbReference type="EC" id="2.5.1.16"/>
    </reaction>
</comment>
<comment type="pathway">
    <text>Amine and polyamine biosynthesis; spermidine biosynthesis; spermidine from putrescine: step 1/1.</text>
</comment>
<comment type="similarity">
    <text evidence="2">Belongs to the spermidine/spermine synthase family.</text>
</comment>
<sequence length="315" mass="34661">MEVTNQSNGCSNNEKESPYISSVLPGWFSEISPLWPGEAHSLKVEKILFQGKSDYQNVMVFQSSTYGKVLVLDGVIQLTERDECAYQEMITHLPLCSIPNPKKVLVIGGGDGGVLREVSRHSSVEQIDICEIDKMVVEVAKEFFPDVAVGYEDPRVNLHIGDGVAFLKNVPAGTYDAVIVDSSDPIGPAQELFEKPFFESIARALRPGGVVSTQAESIWLHMHIIEEIVANCRQIFKGSVNYAWTTVPTYPSGMIGFMLCSTEGPAVDFKNPINPIDDESGPKTIAPLKFYNSEIHQASFCLPSFAKRVIESKGK</sequence>
<feature type="chain" id="PRO_0000156453" description="Spermidine synthase 1">
    <location>
        <begin position="1"/>
        <end position="315"/>
    </location>
</feature>
<feature type="domain" description="PABS">
    <location>
        <begin position="25"/>
        <end position="262"/>
    </location>
</feature>
<feature type="active site" description="Proton acceptor" evidence="1">
    <location>
        <position position="181"/>
    </location>
</feature>
<feature type="binding site" evidence="1">
    <location>
        <position position="56"/>
    </location>
    <ligand>
        <name>S-adenosyl 3-(methylsulfanyl)propylamine</name>
        <dbReference type="ChEBI" id="CHEBI:57443"/>
    </ligand>
</feature>
<feature type="binding site" evidence="1">
    <location>
        <position position="86"/>
    </location>
    <ligand>
        <name>putrescine</name>
        <dbReference type="ChEBI" id="CHEBI:326268"/>
    </ligand>
</feature>
<feature type="binding site" evidence="1">
    <location>
        <position position="87"/>
    </location>
    <ligand>
        <name>S-adenosyl 3-(methylsulfanyl)propylamine</name>
        <dbReference type="ChEBI" id="CHEBI:57443"/>
    </ligand>
</feature>
<feature type="binding site" evidence="1">
    <location>
        <position position="111"/>
    </location>
    <ligand>
        <name>S-adenosyl 3-(methylsulfanyl)propylamine</name>
        <dbReference type="ChEBI" id="CHEBI:57443"/>
    </ligand>
</feature>
<feature type="binding site" evidence="1">
    <location>
        <position position="131"/>
    </location>
    <ligand>
        <name>S-adenosyl 3-(methylsulfanyl)propylamine</name>
        <dbReference type="ChEBI" id="CHEBI:57443"/>
    </ligand>
</feature>
<feature type="binding site" evidence="1">
    <location>
        <begin position="162"/>
        <end position="163"/>
    </location>
    <ligand>
        <name>S-adenosyl 3-(methylsulfanyl)propylamine</name>
        <dbReference type="ChEBI" id="CHEBI:57443"/>
    </ligand>
</feature>
<feature type="binding site" evidence="1">
    <location>
        <begin position="181"/>
        <end position="184"/>
    </location>
    <ligand>
        <name>putrescine</name>
        <dbReference type="ChEBI" id="CHEBI:326268"/>
    </ligand>
</feature>
<feature type="binding site" evidence="1">
    <location>
        <position position="181"/>
    </location>
    <ligand>
        <name>S-adenosyl 3-(methylsulfanyl)propylamine</name>
        <dbReference type="ChEBI" id="CHEBI:57443"/>
    </ligand>
</feature>
<feature type="binding site" evidence="1">
    <location>
        <position position="250"/>
    </location>
    <ligand>
        <name>putrescine</name>
        <dbReference type="ChEBI" id="CHEBI:326268"/>
    </ligand>
</feature>
<organism>
    <name type="scientific">Hyoscyamus niger</name>
    <name type="common">Black henbane</name>
    <dbReference type="NCBI Taxonomy" id="4079"/>
    <lineage>
        <taxon>Eukaryota</taxon>
        <taxon>Viridiplantae</taxon>
        <taxon>Streptophyta</taxon>
        <taxon>Embryophyta</taxon>
        <taxon>Tracheophyta</taxon>
        <taxon>Spermatophyta</taxon>
        <taxon>Magnoliopsida</taxon>
        <taxon>eudicotyledons</taxon>
        <taxon>Gunneridae</taxon>
        <taxon>Pentapetalae</taxon>
        <taxon>asterids</taxon>
        <taxon>lamiids</taxon>
        <taxon>Solanales</taxon>
        <taxon>Solanaceae</taxon>
        <taxon>Solanoideae</taxon>
        <taxon>Hyoscyameae</taxon>
        <taxon>Hyoscyamus</taxon>
    </lineage>
</organism>
<dbReference type="EC" id="2.5.1.16"/>
<dbReference type="EMBL" id="AB006690">
    <property type="protein sequence ID" value="BAA24533.1"/>
    <property type="molecule type" value="mRNA"/>
</dbReference>
<dbReference type="SMR" id="O48658"/>
<dbReference type="UniPathway" id="UPA00248">
    <property type="reaction ID" value="UER00314"/>
</dbReference>
<dbReference type="GO" id="GO:0005829">
    <property type="term" value="C:cytosol"/>
    <property type="evidence" value="ECO:0007669"/>
    <property type="project" value="TreeGrafter"/>
</dbReference>
<dbReference type="GO" id="GO:0004766">
    <property type="term" value="F:spermidine synthase activity"/>
    <property type="evidence" value="ECO:0007669"/>
    <property type="project" value="UniProtKB-EC"/>
</dbReference>
<dbReference type="GO" id="GO:0008295">
    <property type="term" value="P:spermidine biosynthetic process"/>
    <property type="evidence" value="ECO:0007669"/>
    <property type="project" value="UniProtKB-UniPathway"/>
</dbReference>
<dbReference type="CDD" id="cd02440">
    <property type="entry name" value="AdoMet_MTases"/>
    <property type="match status" value="1"/>
</dbReference>
<dbReference type="FunFam" id="2.30.140.10:FF:000003">
    <property type="entry name" value="Spermidine synthase 1"/>
    <property type="match status" value="1"/>
</dbReference>
<dbReference type="FunFam" id="3.40.50.150:FF:000048">
    <property type="entry name" value="Spermidine synthase 1"/>
    <property type="match status" value="1"/>
</dbReference>
<dbReference type="Gene3D" id="2.30.140.10">
    <property type="entry name" value="Spermidine synthase, tetramerisation domain"/>
    <property type="match status" value="1"/>
</dbReference>
<dbReference type="Gene3D" id="3.40.50.150">
    <property type="entry name" value="Vaccinia Virus protein VP39"/>
    <property type="match status" value="1"/>
</dbReference>
<dbReference type="HAMAP" id="MF_00198">
    <property type="entry name" value="Spermidine_synth"/>
    <property type="match status" value="1"/>
</dbReference>
<dbReference type="InterPro" id="IPR030374">
    <property type="entry name" value="PABS"/>
</dbReference>
<dbReference type="InterPro" id="IPR030373">
    <property type="entry name" value="PABS_CS"/>
</dbReference>
<dbReference type="InterPro" id="IPR029063">
    <property type="entry name" value="SAM-dependent_MTases_sf"/>
</dbReference>
<dbReference type="InterPro" id="IPR001045">
    <property type="entry name" value="Spermi_synthase"/>
</dbReference>
<dbReference type="InterPro" id="IPR030668">
    <property type="entry name" value="Spermi_synthase_euk"/>
</dbReference>
<dbReference type="InterPro" id="IPR035246">
    <property type="entry name" value="Spermidine_synt_N"/>
</dbReference>
<dbReference type="InterPro" id="IPR037163">
    <property type="entry name" value="Spermidine_synt_N_sf"/>
</dbReference>
<dbReference type="NCBIfam" id="NF002010">
    <property type="entry name" value="PRK00811.1"/>
    <property type="match status" value="1"/>
</dbReference>
<dbReference type="NCBIfam" id="TIGR00417">
    <property type="entry name" value="speE"/>
    <property type="match status" value="1"/>
</dbReference>
<dbReference type="PANTHER" id="PTHR11558:SF43">
    <property type="entry name" value="SPERMIDINE SYNTHASE"/>
    <property type="match status" value="1"/>
</dbReference>
<dbReference type="PANTHER" id="PTHR11558">
    <property type="entry name" value="SPERMIDINE/SPERMINE SYNTHASE"/>
    <property type="match status" value="1"/>
</dbReference>
<dbReference type="Pfam" id="PF17284">
    <property type="entry name" value="Spermine_synt_N"/>
    <property type="match status" value="1"/>
</dbReference>
<dbReference type="Pfam" id="PF01564">
    <property type="entry name" value="Spermine_synth"/>
    <property type="match status" value="1"/>
</dbReference>
<dbReference type="PIRSF" id="PIRSF000502">
    <property type="entry name" value="Spermidine_synth"/>
    <property type="match status" value="1"/>
</dbReference>
<dbReference type="SUPFAM" id="SSF53335">
    <property type="entry name" value="S-adenosyl-L-methionine-dependent methyltransferases"/>
    <property type="match status" value="1"/>
</dbReference>
<dbReference type="PROSITE" id="PS01330">
    <property type="entry name" value="PABS_1"/>
    <property type="match status" value="1"/>
</dbReference>
<dbReference type="PROSITE" id="PS51006">
    <property type="entry name" value="PABS_2"/>
    <property type="match status" value="1"/>
</dbReference>
<keyword id="KW-0620">Polyamine biosynthesis</keyword>
<keyword id="KW-0745">Spermidine biosynthesis</keyword>
<keyword id="KW-0808">Transferase</keyword>
<accession>O48658</accession>
<protein>
    <recommendedName>
        <fullName>Spermidine synthase 1</fullName>
        <shortName>SPDSY 1</shortName>
        <ecNumber>2.5.1.16</ecNumber>
    </recommendedName>
    <alternativeName>
        <fullName>Putrescine aminopropyltransferase 1</fullName>
    </alternativeName>
</protein>